<sequence length="325" mass="35032">MVSAATRKSLLRARVMDFITSTAILPLLLGCVGLFSLFKLLQWLRMRAYVRNAVVVITGATSGLGRECARVFHAAGARLVLCGRNAEALEELSQELAASRAPGVQTHKPCTVTFDLADPGAIAGAASEILQCFGHVDVLINNAGISYRGAIVDTSPDVDKRVMETNYFGPVALTKALLPAMIRRRQGHVVAISSIQGKISLPFRSAYAASKHATQAFFDCLRAEVEQHDIEVTVISPGYIHTNLSLNAVTADGSKYGVMDETTAQGRSPVQVAQDILAALGKKKKDVVLADPMPSLAVYLRTLAPGLFFRLMASRARKERKSKHS</sequence>
<keyword id="KW-0256">Endoplasmic reticulum</keyword>
<keyword id="KW-0472">Membrane</keyword>
<keyword id="KW-0520">NAD</keyword>
<keyword id="KW-0521">NADP</keyword>
<keyword id="KW-0560">Oxidoreductase</keyword>
<keyword id="KW-1185">Reference proteome</keyword>
<keyword id="KW-0735">Signal-anchor</keyword>
<keyword id="KW-0812">Transmembrane</keyword>
<keyword id="KW-1133">Transmembrane helix</keyword>
<comment type="function">
    <text evidence="6">Putative oxidoreductase.</text>
</comment>
<comment type="subcellular location">
    <subcellularLocation>
        <location evidence="1">Endoplasmic reticulum membrane</location>
        <topology evidence="1">Single-pass type II membrane protein</topology>
    </subcellularLocation>
</comment>
<comment type="similarity">
    <text evidence="6">Belongs to the short-chain dehydrogenases/reductases (SDR) family.</text>
</comment>
<organism>
    <name type="scientific">Bos taurus</name>
    <name type="common">Bovine</name>
    <dbReference type="NCBI Taxonomy" id="9913"/>
    <lineage>
        <taxon>Eukaryota</taxon>
        <taxon>Metazoa</taxon>
        <taxon>Chordata</taxon>
        <taxon>Craniata</taxon>
        <taxon>Vertebrata</taxon>
        <taxon>Euteleostomi</taxon>
        <taxon>Mammalia</taxon>
        <taxon>Eutheria</taxon>
        <taxon>Laurasiatheria</taxon>
        <taxon>Artiodactyla</taxon>
        <taxon>Ruminantia</taxon>
        <taxon>Pecora</taxon>
        <taxon>Bovidae</taxon>
        <taxon>Bovinae</taxon>
        <taxon>Bos</taxon>
    </lineage>
</organism>
<dbReference type="EC" id="1.1.-.-" evidence="6"/>
<dbReference type="EMBL" id="BC102290">
    <property type="protein sequence ID" value="AAI02291.1"/>
    <property type="molecule type" value="mRNA"/>
</dbReference>
<dbReference type="RefSeq" id="NP_001030420.1">
    <property type="nucleotide sequence ID" value="NM_001035343.2"/>
</dbReference>
<dbReference type="SMR" id="Q3T0R4"/>
<dbReference type="FunCoup" id="Q3T0R4">
    <property type="interactions" value="1071"/>
</dbReference>
<dbReference type="STRING" id="9913.ENSBTAP00000013968"/>
<dbReference type="PaxDb" id="9913-ENSBTAP00000013968"/>
<dbReference type="GeneID" id="522283"/>
<dbReference type="KEGG" id="bta:522283"/>
<dbReference type="CTD" id="25979"/>
<dbReference type="eggNOG" id="KOG1205">
    <property type="taxonomic scope" value="Eukaryota"/>
</dbReference>
<dbReference type="InParanoid" id="Q3T0R4"/>
<dbReference type="OrthoDB" id="5307821at2759"/>
<dbReference type="Proteomes" id="UP000009136">
    <property type="component" value="Unplaced"/>
</dbReference>
<dbReference type="GO" id="GO:0005789">
    <property type="term" value="C:endoplasmic reticulum membrane"/>
    <property type="evidence" value="ECO:0007669"/>
    <property type="project" value="UniProtKB-SubCell"/>
</dbReference>
<dbReference type="GO" id="GO:0016020">
    <property type="term" value="C:membrane"/>
    <property type="evidence" value="ECO:0000318"/>
    <property type="project" value="GO_Central"/>
</dbReference>
<dbReference type="GO" id="GO:0016491">
    <property type="term" value="F:oxidoreductase activity"/>
    <property type="evidence" value="ECO:0007669"/>
    <property type="project" value="UniProtKB-KW"/>
</dbReference>
<dbReference type="CDD" id="cd05332">
    <property type="entry name" value="11beta-HSD1_like_SDR_c"/>
    <property type="match status" value="1"/>
</dbReference>
<dbReference type="FunFam" id="3.40.50.720:FF:000122">
    <property type="entry name" value="Dehydrogenase/reductase SDR family member 7B"/>
    <property type="match status" value="1"/>
</dbReference>
<dbReference type="Gene3D" id="3.40.50.720">
    <property type="entry name" value="NAD(P)-binding Rossmann-like Domain"/>
    <property type="match status" value="1"/>
</dbReference>
<dbReference type="InterPro" id="IPR036291">
    <property type="entry name" value="NAD(P)-bd_dom_sf"/>
</dbReference>
<dbReference type="InterPro" id="IPR020904">
    <property type="entry name" value="Sc_DH/Rdtase_CS"/>
</dbReference>
<dbReference type="InterPro" id="IPR002347">
    <property type="entry name" value="SDR_fam"/>
</dbReference>
<dbReference type="NCBIfam" id="NF004825">
    <property type="entry name" value="PRK06181.1"/>
    <property type="match status" value="1"/>
</dbReference>
<dbReference type="PANTHER" id="PTHR44196">
    <property type="entry name" value="DEHYDROGENASE/REDUCTASE SDR FAMILY MEMBER 7B"/>
    <property type="match status" value="1"/>
</dbReference>
<dbReference type="PANTHER" id="PTHR44196:SF1">
    <property type="entry name" value="DEHYDROGENASE_REDUCTASE SDR FAMILY MEMBER 7B"/>
    <property type="match status" value="1"/>
</dbReference>
<dbReference type="Pfam" id="PF00106">
    <property type="entry name" value="adh_short"/>
    <property type="match status" value="1"/>
</dbReference>
<dbReference type="PIRSF" id="PIRSF000126">
    <property type="entry name" value="11-beta-HSD1"/>
    <property type="match status" value="1"/>
</dbReference>
<dbReference type="PRINTS" id="PR00081">
    <property type="entry name" value="GDHRDH"/>
</dbReference>
<dbReference type="PRINTS" id="PR00080">
    <property type="entry name" value="SDRFAMILY"/>
</dbReference>
<dbReference type="SMART" id="SM00822">
    <property type="entry name" value="PKS_KR"/>
    <property type="match status" value="1"/>
</dbReference>
<dbReference type="SUPFAM" id="SSF51735">
    <property type="entry name" value="NAD(P)-binding Rossmann-fold domains"/>
    <property type="match status" value="1"/>
</dbReference>
<dbReference type="PROSITE" id="PS00061">
    <property type="entry name" value="ADH_SHORT"/>
    <property type="match status" value="1"/>
</dbReference>
<reference key="1">
    <citation type="submission" date="2005-08" db="EMBL/GenBank/DDBJ databases">
        <authorList>
            <consortium name="NIH - Mammalian Gene Collection (MGC) project"/>
        </authorList>
    </citation>
    <scope>NUCLEOTIDE SEQUENCE [LARGE SCALE MRNA]</scope>
    <source>
        <strain>Crossbred X Angus</strain>
        <tissue>Ileum</tissue>
    </source>
</reference>
<proteinExistence type="evidence at transcript level"/>
<name>DRS7B_BOVIN</name>
<gene>
    <name type="primary">DHRS7B</name>
    <name evidence="2" type="synonym">SDR32C1</name>
</gene>
<protein>
    <recommendedName>
        <fullName evidence="2">Dehydrogenase/reductase SDR family member 7B</fullName>
        <ecNumber evidence="6">1.1.-.-</ecNumber>
    </recommendedName>
    <alternativeName>
        <fullName evidence="2">Short-chain dehydrogenase/reductase family 32C member 1</fullName>
        <shortName evidence="2">Protein SDR32C1</shortName>
    </alternativeName>
</protein>
<feature type="chain" id="PRO_0000312104" description="Dehydrogenase/reductase SDR family member 7B">
    <location>
        <begin position="1"/>
        <end position="325"/>
    </location>
</feature>
<feature type="topological domain" description="Cytoplasmic" evidence="4">
    <location>
        <begin position="1"/>
        <end position="17"/>
    </location>
</feature>
<feature type="transmembrane region" description="Helical; Signal-anchor for type II membrane protein" evidence="4">
    <location>
        <begin position="18"/>
        <end position="38"/>
    </location>
</feature>
<feature type="topological domain" description="Lumenal" evidence="4">
    <location>
        <begin position="39"/>
        <end position="325"/>
    </location>
</feature>
<feature type="active site" description="Proton acceptor" evidence="5">
    <location>
        <position position="207"/>
    </location>
</feature>
<feature type="binding site" evidence="3">
    <location>
        <position position="62"/>
    </location>
    <ligand>
        <name>NAD(+)</name>
        <dbReference type="ChEBI" id="CHEBI:57540"/>
    </ligand>
</feature>
<feature type="binding site" evidence="3">
    <location>
        <position position="64"/>
    </location>
    <ligand>
        <name>NAD(+)</name>
        <dbReference type="ChEBI" id="CHEBI:57540"/>
    </ligand>
</feature>
<feature type="binding site" evidence="3">
    <location>
        <position position="194"/>
    </location>
    <ligand>
        <name>substrate</name>
    </ligand>
</feature>
<feature type="binding site" evidence="3">
    <location>
        <position position="207"/>
    </location>
    <ligand>
        <name>NAD(+)</name>
        <dbReference type="ChEBI" id="CHEBI:57540"/>
    </ligand>
</feature>
<feature type="binding site" evidence="3">
    <location>
        <position position="211"/>
    </location>
    <ligand>
        <name>NAD(+)</name>
        <dbReference type="ChEBI" id="CHEBI:57540"/>
    </ligand>
</feature>
<feature type="binding site" evidence="3">
    <location>
        <position position="242"/>
    </location>
    <ligand>
        <name>NAD(+)</name>
        <dbReference type="ChEBI" id="CHEBI:57540"/>
    </ligand>
</feature>
<evidence type="ECO:0000250" key="1">
    <source>
        <dbReference type="UniProtKB" id="Q5RJY4"/>
    </source>
</evidence>
<evidence type="ECO:0000250" key="2">
    <source>
        <dbReference type="UniProtKB" id="Q6IAN0"/>
    </source>
</evidence>
<evidence type="ECO:0000250" key="3">
    <source>
        <dbReference type="UniProtKB" id="Q99714"/>
    </source>
</evidence>
<evidence type="ECO:0000255" key="4"/>
<evidence type="ECO:0000255" key="5">
    <source>
        <dbReference type="PROSITE-ProRule" id="PRU10001"/>
    </source>
</evidence>
<evidence type="ECO:0000305" key="6"/>
<accession>Q3T0R4</accession>